<accession>Q43236</accession>
<proteinExistence type="evidence at transcript level"/>
<protein>
    <recommendedName>
        <fullName evidence="7">Leghemoglobin-1</fullName>
    </recommendedName>
    <alternativeName>
        <fullName evidence="7">Leghemoglobin I</fullName>
        <shortName evidence="7">LbI</shortName>
    </alternativeName>
</protein>
<feature type="initiator methionine" description="Removed" evidence="5">
    <location>
        <position position="1"/>
    </location>
</feature>
<feature type="chain" id="PRO_0000193009" description="Leghemoglobin-1">
    <location>
        <begin position="2"/>
        <end position="145"/>
    </location>
</feature>
<feature type="domain" description="Globin" evidence="6">
    <location>
        <begin position="3"/>
        <end position="145"/>
    </location>
</feature>
<feature type="binding site" evidence="3">
    <location>
        <position position="46"/>
    </location>
    <ligand>
        <name>heme b</name>
        <dbReference type="ChEBI" id="CHEBI:60344"/>
    </ligand>
</feature>
<feature type="binding site" evidence="3">
    <location>
        <position position="62"/>
    </location>
    <ligand>
        <name>O2</name>
        <dbReference type="ChEBI" id="CHEBI:15379"/>
    </ligand>
</feature>
<feature type="binding site" evidence="3">
    <location>
        <position position="65"/>
    </location>
    <ligand>
        <name>heme b</name>
        <dbReference type="ChEBI" id="CHEBI:60344"/>
    </ligand>
</feature>
<feature type="binding site" description="proximal binding residue" evidence="6">
    <location>
        <position position="93"/>
    </location>
    <ligand>
        <name>heme b</name>
        <dbReference type="ChEBI" id="CHEBI:60344"/>
    </ligand>
    <ligandPart>
        <name>Fe</name>
        <dbReference type="ChEBI" id="CHEBI:18248"/>
    </ligandPart>
</feature>
<feature type="binding site" evidence="3">
    <location>
        <position position="96"/>
    </location>
    <ligand>
        <name>heme b</name>
        <dbReference type="ChEBI" id="CHEBI:60344"/>
    </ligand>
</feature>
<feature type="modified residue" description="Nitrated tyrosine" evidence="1">
    <location>
        <position position="26"/>
    </location>
</feature>
<feature type="modified residue" description="Nitrated tyrosine" evidence="1">
    <location>
        <position position="31"/>
    </location>
</feature>
<feature type="modified residue" description="Phosphoserine" evidence="4">
    <location>
        <position position="46"/>
    </location>
</feature>
<feature type="modified residue" description="Nitrated tyrosine" evidence="1">
    <location>
        <position position="134"/>
    </location>
</feature>
<reference key="1">
    <citation type="submission" date="1995-08" db="EMBL/GenBank/DDBJ databases">
        <title>Nucleotide sequence and analysis of the cowpea (Vigna unguiculata) leghemoglobin gene.</title>
        <authorList>
            <person name="Arredondo-Peter R."/>
            <person name="Luan P."/>
            <person name="Sarath G."/>
            <person name="Becana M."/>
            <person name="Klucas R.V."/>
        </authorList>
    </citation>
    <scope>NUCLEOTIDE SEQUENCE [GENOMIC DNA]</scope>
</reference>
<name>LGB1_VIGUN</name>
<comment type="function">
    <text evidence="2 5">Leghemoglobin that reversibly binds oxygen O(2) through a pentacoordinated heme iron (By similarity). In root nodules, facilitates the diffusion of oxygen to the bacteroids while preventing the bacterial nitrogenase from being inactivated by buffering dioxygen, nitric oxide and carbon monoxide, and promoting the formation of reactive oxygen species (ROS, e.g. H(2)O(2)) (By similarity). This role is essential for symbiotic nitrogen fixation (SNF) (By similarity).</text>
</comment>
<comment type="subunit">
    <text evidence="3">Monomer.</text>
</comment>
<comment type="subcellular location">
    <subcellularLocation>
        <location evidence="3">Cytoplasm</location>
        <location evidence="3">Cytosol</location>
    </subcellularLocation>
    <subcellularLocation>
        <location evidence="3">Nucleus</location>
    </subcellularLocation>
</comment>
<comment type="tissue specificity">
    <text>Root nodules.</text>
</comment>
<comment type="PTM">
    <text evidence="1">Nitrated in effective nodules and particularly in hypoxic conditions; this mechanism may play a protective role in the symbiosis by buffering toxic peroxynitrite NO(2)(-). Nitration level decrease during nodule senescence.</text>
</comment>
<comment type="PTM">
    <text evidence="4">Phosphorylation at Ser-46 disrupts the molecular environment of its porphyrin ring oxygen binding pocket, thus leading to a reduced oxygen consumption and to the delivery of oxygen O(2) to symbiosomes.</text>
</comment>
<comment type="similarity">
    <text evidence="8">Belongs to the plant globin family.</text>
</comment>
<keyword id="KW-0963">Cytoplasm</keyword>
<keyword id="KW-0349">Heme</keyword>
<keyword id="KW-0408">Iron</keyword>
<keyword id="KW-0479">Metal-binding</keyword>
<keyword id="KW-0944">Nitration</keyword>
<keyword id="KW-0535">Nitrogen fixation</keyword>
<keyword id="KW-0536">Nodulation</keyword>
<keyword id="KW-0539">Nucleus</keyword>
<keyword id="KW-0561">Oxygen transport</keyword>
<keyword id="KW-0597">Phosphoprotein</keyword>
<keyword id="KW-0813">Transport</keyword>
<organism>
    <name type="scientific">Vigna unguiculata</name>
    <name type="common">Cowpea</name>
    <dbReference type="NCBI Taxonomy" id="3917"/>
    <lineage>
        <taxon>Eukaryota</taxon>
        <taxon>Viridiplantae</taxon>
        <taxon>Streptophyta</taxon>
        <taxon>Embryophyta</taxon>
        <taxon>Tracheophyta</taxon>
        <taxon>Spermatophyta</taxon>
        <taxon>Magnoliopsida</taxon>
        <taxon>eudicotyledons</taxon>
        <taxon>Gunneridae</taxon>
        <taxon>Pentapetalae</taxon>
        <taxon>rosids</taxon>
        <taxon>fabids</taxon>
        <taxon>Fabales</taxon>
        <taxon>Fabaceae</taxon>
        <taxon>Papilionoideae</taxon>
        <taxon>50 kb inversion clade</taxon>
        <taxon>NPAAA clade</taxon>
        <taxon>indigoferoid/millettioid clade</taxon>
        <taxon>Phaseoleae</taxon>
        <taxon>Vigna</taxon>
    </lineage>
</organism>
<sequence>MVAFSDKQEALVNGAYEAFKANIPKYSVVFYTTILEKAPAAKNLFSFLANGVDATNPKLTGHAEKLFGLVRDSAAQLRASGGVVADAALGAVHSQKAVNDAQFVVVKEALVKTLKEAVGDKWSDELGTAVELAYDELAAAIKKAY</sequence>
<evidence type="ECO:0000250" key="1">
    <source>
        <dbReference type="UniProtKB" id="P02234"/>
    </source>
</evidence>
<evidence type="ECO:0000250" key="2">
    <source>
        <dbReference type="UniProtKB" id="P02237"/>
    </source>
</evidence>
<evidence type="ECO:0000250" key="3">
    <source>
        <dbReference type="UniProtKB" id="P02240"/>
    </source>
</evidence>
<evidence type="ECO:0000250" key="4">
    <source>
        <dbReference type="UniProtKB" id="Q3C1F7"/>
    </source>
</evidence>
<evidence type="ECO:0000250" key="5">
    <source>
        <dbReference type="UniProtKB" id="Q43296"/>
    </source>
</evidence>
<evidence type="ECO:0000255" key="6">
    <source>
        <dbReference type="PROSITE-ProRule" id="PRU00238"/>
    </source>
</evidence>
<evidence type="ECO:0000303" key="7">
    <source ref="1"/>
</evidence>
<evidence type="ECO:0000305" key="8"/>
<gene>
    <name evidence="7" type="primary">LBI</name>
</gene>
<dbReference type="EMBL" id="U33206">
    <property type="protein sequence ID" value="AAA86756.1"/>
    <property type="molecule type" value="Genomic_DNA"/>
</dbReference>
<dbReference type="PIR" id="T11573">
    <property type="entry name" value="T11573"/>
</dbReference>
<dbReference type="RefSeq" id="NP_001363034.1">
    <property type="nucleotide sequence ID" value="NM_001376105.1"/>
</dbReference>
<dbReference type="SMR" id="Q43236"/>
<dbReference type="EnsemblPlants" id="Vigun07g190900.1.v1.2">
    <property type="protein sequence ID" value="Vigun07g190900.1.v1.2"/>
    <property type="gene ID" value="Vigun07g190900.v1.2"/>
</dbReference>
<dbReference type="GeneID" id="114192575"/>
<dbReference type="Gramene" id="Vigun07g190900.1.v1.2">
    <property type="protein sequence ID" value="Vigun07g190900.1.v1.2"/>
    <property type="gene ID" value="Vigun07g190900.v1.2"/>
</dbReference>
<dbReference type="OrthoDB" id="2012505at2759"/>
<dbReference type="GO" id="GO:0005829">
    <property type="term" value="C:cytosol"/>
    <property type="evidence" value="ECO:0007669"/>
    <property type="project" value="UniProtKB-SubCell"/>
</dbReference>
<dbReference type="GO" id="GO:0005634">
    <property type="term" value="C:nucleus"/>
    <property type="evidence" value="ECO:0007669"/>
    <property type="project" value="UniProtKB-SubCell"/>
</dbReference>
<dbReference type="GO" id="GO:0020037">
    <property type="term" value="F:heme binding"/>
    <property type="evidence" value="ECO:0007669"/>
    <property type="project" value="InterPro"/>
</dbReference>
<dbReference type="GO" id="GO:0046872">
    <property type="term" value="F:metal ion binding"/>
    <property type="evidence" value="ECO:0007669"/>
    <property type="project" value="UniProtKB-KW"/>
</dbReference>
<dbReference type="GO" id="GO:0019825">
    <property type="term" value="F:oxygen binding"/>
    <property type="evidence" value="ECO:0007669"/>
    <property type="project" value="InterPro"/>
</dbReference>
<dbReference type="GO" id="GO:0005344">
    <property type="term" value="F:oxygen carrier activity"/>
    <property type="evidence" value="ECO:0007669"/>
    <property type="project" value="UniProtKB-KW"/>
</dbReference>
<dbReference type="GO" id="GO:0009877">
    <property type="term" value="P:nodulation"/>
    <property type="evidence" value="ECO:0007669"/>
    <property type="project" value="UniProtKB-KW"/>
</dbReference>
<dbReference type="Gene3D" id="1.10.490.10">
    <property type="entry name" value="Globins"/>
    <property type="match status" value="1"/>
</dbReference>
<dbReference type="InterPro" id="IPR000971">
    <property type="entry name" value="Globin"/>
</dbReference>
<dbReference type="InterPro" id="IPR009050">
    <property type="entry name" value="Globin-like_sf"/>
</dbReference>
<dbReference type="InterPro" id="IPR012292">
    <property type="entry name" value="Globin/Proto"/>
</dbReference>
<dbReference type="InterPro" id="IPR001032">
    <property type="entry name" value="Leghaemoglobin-like"/>
</dbReference>
<dbReference type="InterPro" id="IPR019824">
    <property type="entry name" value="Leghaemoglobin_Fe_BS"/>
</dbReference>
<dbReference type="PANTHER" id="PTHR22924">
    <property type="entry name" value="LEGHEMOGLOBIN-RELATED"/>
    <property type="match status" value="1"/>
</dbReference>
<dbReference type="PANTHER" id="PTHR22924:SF92">
    <property type="entry name" value="NON-SYMBIOTIC HEMOGLOBIN 2"/>
    <property type="match status" value="1"/>
</dbReference>
<dbReference type="Pfam" id="PF00042">
    <property type="entry name" value="Globin"/>
    <property type="match status" value="1"/>
</dbReference>
<dbReference type="PRINTS" id="PR00188">
    <property type="entry name" value="PLANTGLOBIN"/>
</dbReference>
<dbReference type="SUPFAM" id="SSF46458">
    <property type="entry name" value="Globin-like"/>
    <property type="match status" value="1"/>
</dbReference>
<dbReference type="PROSITE" id="PS01033">
    <property type="entry name" value="GLOBIN"/>
    <property type="match status" value="1"/>
</dbReference>
<dbReference type="PROSITE" id="PS00208">
    <property type="entry name" value="PLANT_GLOBIN"/>
    <property type="match status" value="1"/>
</dbReference>